<reference key="1">
    <citation type="journal article" date="2004" name="Syst. Biol.">
        <title>A molecular supermatrix of the rabbits and hares (Leporidae) allows for the identification of five intercontinental exchanges during the Miocene.</title>
        <authorList>
            <person name="Matthee C.A."/>
            <person name="van Vuuren B.J."/>
            <person name="Bell D."/>
            <person name="Robinson T.J."/>
        </authorList>
    </citation>
    <scope>NUCLEOTIDE SEQUENCE [GENOMIC DNA]</scope>
</reference>
<dbReference type="EMBL" id="AY292736">
    <property type="protein sequence ID" value="AAS54932.1"/>
    <property type="molecule type" value="Genomic_DNA"/>
</dbReference>
<dbReference type="SMR" id="Q6ELU8"/>
<dbReference type="GO" id="GO:0005743">
    <property type="term" value="C:mitochondrial inner membrane"/>
    <property type="evidence" value="ECO:0007669"/>
    <property type="project" value="UniProtKB-SubCell"/>
</dbReference>
<dbReference type="GO" id="GO:0045275">
    <property type="term" value="C:respiratory chain complex III"/>
    <property type="evidence" value="ECO:0007669"/>
    <property type="project" value="InterPro"/>
</dbReference>
<dbReference type="GO" id="GO:0046872">
    <property type="term" value="F:metal ion binding"/>
    <property type="evidence" value="ECO:0007669"/>
    <property type="project" value="UniProtKB-KW"/>
</dbReference>
<dbReference type="GO" id="GO:0008121">
    <property type="term" value="F:ubiquinol-cytochrome-c reductase activity"/>
    <property type="evidence" value="ECO:0007669"/>
    <property type="project" value="InterPro"/>
</dbReference>
<dbReference type="GO" id="GO:0006122">
    <property type="term" value="P:mitochondrial electron transport, ubiquinol to cytochrome c"/>
    <property type="evidence" value="ECO:0007669"/>
    <property type="project" value="TreeGrafter"/>
</dbReference>
<dbReference type="CDD" id="cd00290">
    <property type="entry name" value="cytochrome_b_C"/>
    <property type="match status" value="1"/>
</dbReference>
<dbReference type="CDD" id="cd00284">
    <property type="entry name" value="Cytochrome_b_N"/>
    <property type="match status" value="1"/>
</dbReference>
<dbReference type="FunFam" id="1.20.810.10:FF:000002">
    <property type="entry name" value="Cytochrome b"/>
    <property type="match status" value="1"/>
</dbReference>
<dbReference type="Gene3D" id="1.20.810.10">
    <property type="entry name" value="Cytochrome Bc1 Complex, Chain C"/>
    <property type="match status" value="1"/>
</dbReference>
<dbReference type="InterPro" id="IPR005798">
    <property type="entry name" value="Cyt_b/b6_C"/>
</dbReference>
<dbReference type="InterPro" id="IPR036150">
    <property type="entry name" value="Cyt_b/b6_C_sf"/>
</dbReference>
<dbReference type="InterPro" id="IPR005797">
    <property type="entry name" value="Cyt_b/b6_N"/>
</dbReference>
<dbReference type="InterPro" id="IPR027387">
    <property type="entry name" value="Cytb/b6-like_sf"/>
</dbReference>
<dbReference type="InterPro" id="IPR030689">
    <property type="entry name" value="Cytochrome_b"/>
</dbReference>
<dbReference type="InterPro" id="IPR048260">
    <property type="entry name" value="Cytochrome_b_C_euk/bac"/>
</dbReference>
<dbReference type="InterPro" id="IPR048259">
    <property type="entry name" value="Cytochrome_b_N_euk/bac"/>
</dbReference>
<dbReference type="InterPro" id="IPR016174">
    <property type="entry name" value="Di-haem_cyt_TM"/>
</dbReference>
<dbReference type="PANTHER" id="PTHR19271">
    <property type="entry name" value="CYTOCHROME B"/>
    <property type="match status" value="1"/>
</dbReference>
<dbReference type="PANTHER" id="PTHR19271:SF16">
    <property type="entry name" value="CYTOCHROME B"/>
    <property type="match status" value="1"/>
</dbReference>
<dbReference type="Pfam" id="PF00032">
    <property type="entry name" value="Cytochrom_B_C"/>
    <property type="match status" value="1"/>
</dbReference>
<dbReference type="Pfam" id="PF00033">
    <property type="entry name" value="Cytochrome_B"/>
    <property type="match status" value="1"/>
</dbReference>
<dbReference type="PIRSF" id="PIRSF038885">
    <property type="entry name" value="COB"/>
    <property type="match status" value="1"/>
</dbReference>
<dbReference type="SUPFAM" id="SSF81648">
    <property type="entry name" value="a domain/subunit of cytochrome bc1 complex (Ubiquinol-cytochrome c reductase)"/>
    <property type="match status" value="1"/>
</dbReference>
<dbReference type="SUPFAM" id="SSF81342">
    <property type="entry name" value="Transmembrane di-heme cytochromes"/>
    <property type="match status" value="1"/>
</dbReference>
<dbReference type="PROSITE" id="PS51003">
    <property type="entry name" value="CYTB_CTER"/>
    <property type="match status" value="1"/>
</dbReference>
<dbReference type="PROSITE" id="PS51002">
    <property type="entry name" value="CYTB_NTER"/>
    <property type="match status" value="1"/>
</dbReference>
<evidence type="ECO:0000250" key="1"/>
<evidence type="ECO:0000250" key="2">
    <source>
        <dbReference type="UniProtKB" id="P00157"/>
    </source>
</evidence>
<evidence type="ECO:0000255" key="3">
    <source>
        <dbReference type="PROSITE-ProRule" id="PRU00967"/>
    </source>
</evidence>
<evidence type="ECO:0000255" key="4">
    <source>
        <dbReference type="PROSITE-ProRule" id="PRU00968"/>
    </source>
</evidence>
<comment type="function">
    <text evidence="2">Component of the ubiquinol-cytochrome c reductase complex (complex III or cytochrome b-c1 complex) that is part of the mitochondrial respiratory chain. The b-c1 complex mediates electron transfer from ubiquinol to cytochrome c. Contributes to the generation of a proton gradient across the mitochondrial membrane that is then used for ATP synthesis.</text>
</comment>
<comment type="cofactor">
    <cofactor evidence="2">
        <name>heme b</name>
        <dbReference type="ChEBI" id="CHEBI:60344"/>
    </cofactor>
    <text evidence="2">Binds 2 heme b groups non-covalently.</text>
</comment>
<comment type="subunit">
    <text evidence="2">The cytochrome bc1 complex contains 11 subunits: 3 respiratory subunits (MT-CYB, CYC1 and UQCRFS1), 2 core proteins (UQCRC1 and UQCRC2) and 6 low-molecular weight proteins (UQCRH/QCR6, UQCRB/QCR7, UQCRQ/QCR8, UQCR10/QCR9, UQCR11/QCR10 and a cleavage product of UQCRFS1). This cytochrome bc1 complex then forms a dimer.</text>
</comment>
<comment type="subcellular location">
    <subcellularLocation>
        <location evidence="2">Mitochondrion inner membrane</location>
        <topology evidence="2">Multi-pass membrane protein</topology>
    </subcellularLocation>
</comment>
<comment type="miscellaneous">
    <text evidence="1">Heme 1 (or BL or b562) is low-potential and absorbs at about 562 nm, and heme 2 (or BH or b566) is high-potential and absorbs at about 566 nm.</text>
</comment>
<comment type="similarity">
    <text evidence="3 4">Belongs to the cytochrome b family.</text>
</comment>
<comment type="caution">
    <text evidence="2">The full-length protein contains only eight transmembrane helices, not nine as predicted by bioinformatics tools.</text>
</comment>
<name>CYB_PROSA</name>
<protein>
    <recommendedName>
        <fullName>Cytochrome b</fullName>
    </recommendedName>
    <alternativeName>
        <fullName>Complex III subunit 3</fullName>
    </alternativeName>
    <alternativeName>
        <fullName>Complex III subunit III</fullName>
    </alternativeName>
    <alternativeName>
        <fullName>Cytochrome b-c1 complex subunit 3</fullName>
    </alternativeName>
    <alternativeName>
        <fullName>Ubiquinol-cytochrome-c reductase complex cytochrome b subunit</fullName>
    </alternativeName>
</protein>
<geneLocation type="mitochondrion"/>
<organism>
    <name type="scientific">Pronolagus saundersiae</name>
    <name type="common">Hewitt's red rock hare</name>
    <name type="synonym">Pronolagus rupestris saundersiae</name>
    <dbReference type="NCBI Taxonomy" id="235650"/>
    <lineage>
        <taxon>Eukaryota</taxon>
        <taxon>Metazoa</taxon>
        <taxon>Chordata</taxon>
        <taxon>Craniata</taxon>
        <taxon>Vertebrata</taxon>
        <taxon>Euteleostomi</taxon>
        <taxon>Mammalia</taxon>
        <taxon>Eutheria</taxon>
        <taxon>Euarchontoglires</taxon>
        <taxon>Glires</taxon>
        <taxon>Lagomorpha</taxon>
        <taxon>Leporidae</taxon>
        <taxon>Pronolagus</taxon>
    </lineage>
</organism>
<feature type="chain" id="PRO_0000061444" description="Cytochrome b">
    <location>
        <begin position="1"/>
        <end position="379"/>
    </location>
</feature>
<feature type="transmembrane region" description="Helical" evidence="2">
    <location>
        <begin position="33"/>
        <end position="53"/>
    </location>
</feature>
<feature type="transmembrane region" description="Helical" evidence="2">
    <location>
        <begin position="77"/>
        <end position="98"/>
    </location>
</feature>
<feature type="transmembrane region" description="Helical" evidence="2">
    <location>
        <begin position="113"/>
        <end position="133"/>
    </location>
</feature>
<feature type="transmembrane region" description="Helical" evidence="2">
    <location>
        <begin position="178"/>
        <end position="198"/>
    </location>
</feature>
<feature type="transmembrane region" description="Helical" evidence="2">
    <location>
        <begin position="226"/>
        <end position="246"/>
    </location>
</feature>
<feature type="transmembrane region" description="Helical" evidence="2">
    <location>
        <begin position="288"/>
        <end position="308"/>
    </location>
</feature>
<feature type="transmembrane region" description="Helical" evidence="2">
    <location>
        <begin position="320"/>
        <end position="340"/>
    </location>
</feature>
<feature type="transmembrane region" description="Helical" evidence="2">
    <location>
        <begin position="347"/>
        <end position="367"/>
    </location>
</feature>
<feature type="binding site" description="axial binding residue" evidence="2">
    <location>
        <position position="83"/>
    </location>
    <ligand>
        <name>heme b</name>
        <dbReference type="ChEBI" id="CHEBI:60344"/>
        <label>b562</label>
    </ligand>
    <ligandPart>
        <name>Fe</name>
        <dbReference type="ChEBI" id="CHEBI:18248"/>
    </ligandPart>
</feature>
<feature type="binding site" description="axial binding residue" evidence="2">
    <location>
        <position position="97"/>
    </location>
    <ligand>
        <name>heme b</name>
        <dbReference type="ChEBI" id="CHEBI:60344"/>
        <label>b566</label>
    </ligand>
    <ligandPart>
        <name>Fe</name>
        <dbReference type="ChEBI" id="CHEBI:18248"/>
    </ligandPart>
</feature>
<feature type="binding site" description="axial binding residue" evidence="2">
    <location>
        <position position="182"/>
    </location>
    <ligand>
        <name>heme b</name>
        <dbReference type="ChEBI" id="CHEBI:60344"/>
        <label>b562</label>
    </ligand>
    <ligandPart>
        <name>Fe</name>
        <dbReference type="ChEBI" id="CHEBI:18248"/>
    </ligandPart>
</feature>
<feature type="binding site" description="axial binding residue" evidence="2">
    <location>
        <position position="196"/>
    </location>
    <ligand>
        <name>heme b</name>
        <dbReference type="ChEBI" id="CHEBI:60344"/>
        <label>b566</label>
    </ligand>
    <ligandPart>
        <name>Fe</name>
        <dbReference type="ChEBI" id="CHEBI:18248"/>
    </ligandPart>
</feature>
<feature type="binding site" evidence="2">
    <location>
        <position position="201"/>
    </location>
    <ligand>
        <name>a ubiquinone</name>
        <dbReference type="ChEBI" id="CHEBI:16389"/>
    </ligand>
</feature>
<proteinExistence type="inferred from homology"/>
<gene>
    <name type="primary">MT-CYB</name>
    <name type="synonym">COB</name>
    <name type="synonym">CYTB</name>
    <name type="synonym">MTCYB</name>
</gene>
<sequence length="379" mass="42754">MTNIRKTHPLLKIVNHSLIDLPAPSNISAWWNFGSLLGLCLILQILTGLFLAMHYTSDTMTAFSSVTHICRDVNHGWIIRYLHANRSSMFFICLYMHVGRGIYYGSYTYTETWNIGILLLFTVMATAFMGYVLPWGQMSFWGATVITNLLSAIPYIGTNLVEWIWGGFSVDKATLTRFFAFHFILPFIITALVMVHLLFLHETGSNNPSGIPSNSDKIPFHPYYTIKDALGFLMLISLLLLLALFTPDLLGDPDNYSPANPLNTPPHIKPEWYFLFAYAILRSIPNKLGGVLALVMSILILAIIPLLHTSKQRSMMFRPLSQALFWILVADLVTLTWIGGQPVEHPFITIGQAASVLYFTLILILMPLASLIENKILKW</sequence>
<keyword id="KW-0249">Electron transport</keyword>
<keyword id="KW-0349">Heme</keyword>
<keyword id="KW-0408">Iron</keyword>
<keyword id="KW-0472">Membrane</keyword>
<keyword id="KW-0479">Metal-binding</keyword>
<keyword id="KW-0496">Mitochondrion</keyword>
<keyword id="KW-0999">Mitochondrion inner membrane</keyword>
<keyword id="KW-0679">Respiratory chain</keyword>
<keyword id="KW-0812">Transmembrane</keyword>
<keyword id="KW-1133">Transmembrane helix</keyword>
<keyword id="KW-0813">Transport</keyword>
<keyword id="KW-0830">Ubiquinone</keyword>
<accession>Q6ELU8</accession>